<keyword id="KW-0050">Antiport</keyword>
<keyword id="KW-0997">Cell inner membrane</keyword>
<keyword id="KW-1003">Cell membrane</keyword>
<keyword id="KW-0406">Ion transport</keyword>
<keyword id="KW-0472">Membrane</keyword>
<keyword id="KW-0915">Sodium</keyword>
<keyword id="KW-0739">Sodium transport</keyword>
<keyword id="KW-0812">Transmembrane</keyword>
<keyword id="KW-1133">Transmembrane helix</keyword>
<keyword id="KW-0813">Transport</keyword>
<name>MDTK_ECOSE</name>
<gene>
    <name evidence="1" type="primary">mdtK</name>
    <name type="ordered locus">ECSE_1787</name>
</gene>
<sequence>MQKYISEARLLLALAIPVILAQIAQTAMGFVDTVMAGGYSATDMAAVAIGTSIWLPAILFGHGLLLALTPVIAQLNGSGRRERIAHQVRQGFWLAGFVSVLIMLVLWNAGYIIRSMENIDPALADKAVGYLRALLWGAPGYLFFQVARNQCEGLAKTKPGMVMGFIGLLVNIPVNYIFIYGHFGMPELGGVGCGVATAAVYWVMFLAMVSYIKRARSMRDIRNEKGTAKPDPAVMKRLIQLGLPIALALFFEVTLFAVVALLVSPLGIVDVAGHQIALNFSSLMFVLPMSLAAAVTIRVGYRLGQGSTLDAQTAARTGLMVGVCMATLTAIFTVSLREQIALLYNDNPEVVTLAAHLMLLAAVYQISDSIQVIGSGILRGYKDTRSIFYITFTAYWVLGLPSGYILALTDLVVKPMGPAGFWIGFIIGLTSAAIMMMLRMRFLQRLPSVIILQRASR</sequence>
<evidence type="ECO:0000255" key="1">
    <source>
        <dbReference type="HAMAP-Rule" id="MF_00400"/>
    </source>
</evidence>
<organism>
    <name type="scientific">Escherichia coli (strain SE11)</name>
    <dbReference type="NCBI Taxonomy" id="409438"/>
    <lineage>
        <taxon>Bacteria</taxon>
        <taxon>Pseudomonadati</taxon>
        <taxon>Pseudomonadota</taxon>
        <taxon>Gammaproteobacteria</taxon>
        <taxon>Enterobacterales</taxon>
        <taxon>Enterobacteriaceae</taxon>
        <taxon>Escherichia</taxon>
    </lineage>
</organism>
<reference key="1">
    <citation type="journal article" date="2008" name="DNA Res.">
        <title>Complete genome sequence and comparative analysis of the wild-type commensal Escherichia coli strain SE11 isolated from a healthy adult.</title>
        <authorList>
            <person name="Oshima K."/>
            <person name="Toh H."/>
            <person name="Ogura Y."/>
            <person name="Sasamoto H."/>
            <person name="Morita H."/>
            <person name="Park S.-H."/>
            <person name="Ooka T."/>
            <person name="Iyoda S."/>
            <person name="Taylor T.D."/>
            <person name="Hayashi T."/>
            <person name="Itoh K."/>
            <person name="Hattori M."/>
        </authorList>
    </citation>
    <scope>NUCLEOTIDE SEQUENCE [LARGE SCALE GENOMIC DNA]</scope>
    <source>
        <strain>SE11</strain>
    </source>
</reference>
<proteinExistence type="inferred from homology"/>
<feature type="chain" id="PRO_1000191090" description="Multidrug resistance protein MdtK">
    <location>
        <begin position="1"/>
        <end position="457"/>
    </location>
</feature>
<feature type="transmembrane region" description="Helical" evidence="1">
    <location>
        <begin position="11"/>
        <end position="31"/>
    </location>
</feature>
<feature type="transmembrane region" description="Helical" evidence="1">
    <location>
        <begin position="53"/>
        <end position="73"/>
    </location>
</feature>
<feature type="transmembrane region" description="Helical" evidence="1">
    <location>
        <begin position="93"/>
        <end position="113"/>
    </location>
</feature>
<feature type="transmembrane region" description="Helical" evidence="1">
    <location>
        <begin position="127"/>
        <end position="147"/>
    </location>
</feature>
<feature type="transmembrane region" description="Helical" evidence="1">
    <location>
        <begin position="160"/>
        <end position="180"/>
    </location>
</feature>
<feature type="transmembrane region" description="Helical" evidence="1">
    <location>
        <begin position="189"/>
        <end position="209"/>
    </location>
</feature>
<feature type="transmembrane region" description="Helical" evidence="1">
    <location>
        <begin position="243"/>
        <end position="263"/>
    </location>
</feature>
<feature type="transmembrane region" description="Helical" evidence="1">
    <location>
        <begin position="276"/>
        <end position="296"/>
    </location>
</feature>
<feature type="transmembrane region" description="Helical" evidence="1">
    <location>
        <begin position="314"/>
        <end position="334"/>
    </location>
</feature>
<feature type="transmembrane region" description="Helical" evidence="1">
    <location>
        <begin position="350"/>
        <end position="370"/>
    </location>
</feature>
<feature type="transmembrane region" description="Helical" evidence="1">
    <location>
        <begin position="387"/>
        <end position="407"/>
    </location>
</feature>
<feature type="transmembrane region" description="Helical" evidence="1">
    <location>
        <begin position="418"/>
        <end position="438"/>
    </location>
</feature>
<protein>
    <recommendedName>
        <fullName evidence="1">Multidrug resistance protein MdtK</fullName>
    </recommendedName>
    <alternativeName>
        <fullName evidence="1">Multidrug-efflux transporter</fullName>
    </alternativeName>
</protein>
<dbReference type="EMBL" id="AP009240">
    <property type="protein sequence ID" value="BAG77311.1"/>
    <property type="molecule type" value="Genomic_DNA"/>
</dbReference>
<dbReference type="RefSeq" id="WP_001174946.1">
    <property type="nucleotide sequence ID" value="NC_011415.1"/>
</dbReference>
<dbReference type="SMR" id="B6IBA3"/>
<dbReference type="KEGG" id="ecy:ECSE_1787"/>
<dbReference type="HOGENOM" id="CLU_012893_6_0_6"/>
<dbReference type="Proteomes" id="UP000008199">
    <property type="component" value="Chromosome"/>
</dbReference>
<dbReference type="GO" id="GO:0005886">
    <property type="term" value="C:plasma membrane"/>
    <property type="evidence" value="ECO:0007669"/>
    <property type="project" value="UniProtKB-SubCell"/>
</dbReference>
<dbReference type="GO" id="GO:0015297">
    <property type="term" value="F:antiporter activity"/>
    <property type="evidence" value="ECO:0007669"/>
    <property type="project" value="UniProtKB-UniRule"/>
</dbReference>
<dbReference type="GO" id="GO:0042910">
    <property type="term" value="F:xenobiotic transmembrane transporter activity"/>
    <property type="evidence" value="ECO:0007669"/>
    <property type="project" value="UniProtKB-UniRule"/>
</dbReference>
<dbReference type="GO" id="GO:0006814">
    <property type="term" value="P:sodium ion transport"/>
    <property type="evidence" value="ECO:0007669"/>
    <property type="project" value="UniProtKB-UniRule"/>
</dbReference>
<dbReference type="GO" id="GO:0006855">
    <property type="term" value="P:xenobiotic transmembrane transport"/>
    <property type="evidence" value="ECO:0007669"/>
    <property type="project" value="UniProtKB-UniRule"/>
</dbReference>
<dbReference type="CDD" id="cd13131">
    <property type="entry name" value="MATE_NorM_like"/>
    <property type="match status" value="1"/>
</dbReference>
<dbReference type="HAMAP" id="MF_00400">
    <property type="entry name" value="MdtK"/>
    <property type="match status" value="1"/>
</dbReference>
<dbReference type="InterPro" id="IPR002528">
    <property type="entry name" value="MATE_fam"/>
</dbReference>
<dbReference type="InterPro" id="IPR050222">
    <property type="entry name" value="MATE_MdtK"/>
</dbReference>
<dbReference type="InterPro" id="IPR048279">
    <property type="entry name" value="MdtK-like"/>
</dbReference>
<dbReference type="InterPro" id="IPR022913">
    <property type="entry name" value="Multidrug-R_MdtK"/>
</dbReference>
<dbReference type="NCBIfam" id="TIGR00797">
    <property type="entry name" value="matE"/>
    <property type="match status" value="1"/>
</dbReference>
<dbReference type="PANTHER" id="PTHR43298:SF2">
    <property type="entry name" value="FMN_FAD EXPORTER YEEO-RELATED"/>
    <property type="match status" value="1"/>
</dbReference>
<dbReference type="PANTHER" id="PTHR43298">
    <property type="entry name" value="MULTIDRUG RESISTANCE PROTEIN NORM-RELATED"/>
    <property type="match status" value="1"/>
</dbReference>
<dbReference type="Pfam" id="PF01554">
    <property type="entry name" value="MatE"/>
    <property type="match status" value="2"/>
</dbReference>
<dbReference type="PIRSF" id="PIRSF006603">
    <property type="entry name" value="DinF"/>
    <property type="match status" value="1"/>
</dbReference>
<accession>B6IBA3</accession>
<comment type="function">
    <text evidence="1">Multidrug efflux pump that functions probably as a Na(+)/drug antiporter.</text>
</comment>
<comment type="subcellular location">
    <subcellularLocation>
        <location evidence="1">Cell inner membrane</location>
        <topology evidence="1">Multi-pass membrane protein</topology>
    </subcellularLocation>
</comment>
<comment type="similarity">
    <text evidence="1">Belongs to the multi antimicrobial extrusion (MATE) (TC 2.A.66.1) family. MdtK subfamily.</text>
</comment>